<sequence>MKIIGILGIQGDIEEHEDAVKKINCIPKRIRTVDDLEGIDALIIPGGESTTIGKLMVSYGFIDKIRNLKIPILGTCAGMVLLSKGTGKEQPLLEMLNVTIKRNAYGSQKDSFEKEIDLGGKKINAVFIRAPQVGEILSKDVEIISKDDENIVGIKEGNIMAISFHPELSDDGVIAYEYFLKNFVEKR</sequence>
<name>PDXT_METMP</name>
<dbReference type="EC" id="4.3.3.6" evidence="1"/>
<dbReference type="EC" id="3.5.1.2" evidence="1"/>
<dbReference type="EMBL" id="BX950229">
    <property type="protein sequence ID" value="CAF31212.1"/>
    <property type="molecule type" value="Genomic_DNA"/>
</dbReference>
<dbReference type="RefSeq" id="WP_011171600.1">
    <property type="nucleotide sequence ID" value="NC_005791.1"/>
</dbReference>
<dbReference type="SMR" id="P0C036"/>
<dbReference type="STRING" id="267377.MMP1656"/>
<dbReference type="EnsemblBacteria" id="CAF31212">
    <property type="protein sequence ID" value="CAF31212"/>
    <property type="gene ID" value="MMP1656"/>
</dbReference>
<dbReference type="GeneID" id="2761526"/>
<dbReference type="KEGG" id="mmp:MMP1656"/>
<dbReference type="PATRIC" id="fig|267377.15.peg.1695"/>
<dbReference type="eggNOG" id="arCOG00034">
    <property type="taxonomic scope" value="Archaea"/>
</dbReference>
<dbReference type="HOGENOM" id="CLU_069674_2_0_2"/>
<dbReference type="OrthoDB" id="26717at2157"/>
<dbReference type="UniPathway" id="UPA00245"/>
<dbReference type="Proteomes" id="UP000000590">
    <property type="component" value="Chromosome"/>
</dbReference>
<dbReference type="GO" id="GO:0005829">
    <property type="term" value="C:cytosol"/>
    <property type="evidence" value="ECO:0007669"/>
    <property type="project" value="TreeGrafter"/>
</dbReference>
<dbReference type="GO" id="GO:1903600">
    <property type="term" value="C:glutaminase complex"/>
    <property type="evidence" value="ECO:0007669"/>
    <property type="project" value="TreeGrafter"/>
</dbReference>
<dbReference type="GO" id="GO:0004359">
    <property type="term" value="F:glutaminase activity"/>
    <property type="evidence" value="ECO:0007669"/>
    <property type="project" value="UniProtKB-UniRule"/>
</dbReference>
<dbReference type="GO" id="GO:0036381">
    <property type="term" value="F:pyridoxal 5'-phosphate synthase (glutamine hydrolysing) activity"/>
    <property type="evidence" value="ECO:0007669"/>
    <property type="project" value="UniProtKB-UniRule"/>
</dbReference>
<dbReference type="GO" id="GO:0006543">
    <property type="term" value="P:glutamine catabolic process"/>
    <property type="evidence" value="ECO:0007669"/>
    <property type="project" value="UniProtKB-UniRule"/>
</dbReference>
<dbReference type="GO" id="GO:0042823">
    <property type="term" value="P:pyridoxal phosphate biosynthetic process"/>
    <property type="evidence" value="ECO:0007669"/>
    <property type="project" value="UniProtKB-UniRule"/>
</dbReference>
<dbReference type="GO" id="GO:0008614">
    <property type="term" value="P:pyridoxine metabolic process"/>
    <property type="evidence" value="ECO:0007669"/>
    <property type="project" value="TreeGrafter"/>
</dbReference>
<dbReference type="CDD" id="cd01749">
    <property type="entry name" value="GATase1_PB"/>
    <property type="match status" value="1"/>
</dbReference>
<dbReference type="FunFam" id="3.40.50.880:FF:000010">
    <property type="entry name" value="uncharacterized protein LOC100176842 isoform X2"/>
    <property type="match status" value="1"/>
</dbReference>
<dbReference type="Gene3D" id="3.40.50.880">
    <property type="match status" value="1"/>
</dbReference>
<dbReference type="HAMAP" id="MF_01615">
    <property type="entry name" value="PdxT"/>
    <property type="match status" value="1"/>
</dbReference>
<dbReference type="InterPro" id="IPR029062">
    <property type="entry name" value="Class_I_gatase-like"/>
</dbReference>
<dbReference type="InterPro" id="IPR002161">
    <property type="entry name" value="PdxT/SNO"/>
</dbReference>
<dbReference type="InterPro" id="IPR021196">
    <property type="entry name" value="PdxT/SNO_CS"/>
</dbReference>
<dbReference type="NCBIfam" id="TIGR03800">
    <property type="entry name" value="PLP_synth_Pdx2"/>
    <property type="match status" value="1"/>
</dbReference>
<dbReference type="PANTHER" id="PTHR31559">
    <property type="entry name" value="PYRIDOXAL 5'-PHOSPHATE SYNTHASE SUBUNIT SNO"/>
    <property type="match status" value="1"/>
</dbReference>
<dbReference type="PANTHER" id="PTHR31559:SF0">
    <property type="entry name" value="PYRIDOXAL 5'-PHOSPHATE SYNTHASE SUBUNIT SNO1-RELATED"/>
    <property type="match status" value="1"/>
</dbReference>
<dbReference type="Pfam" id="PF01174">
    <property type="entry name" value="SNO"/>
    <property type="match status" value="1"/>
</dbReference>
<dbReference type="PIRSF" id="PIRSF005639">
    <property type="entry name" value="Glut_amidoT_SNO"/>
    <property type="match status" value="1"/>
</dbReference>
<dbReference type="SUPFAM" id="SSF52317">
    <property type="entry name" value="Class I glutamine amidotransferase-like"/>
    <property type="match status" value="1"/>
</dbReference>
<dbReference type="PROSITE" id="PS01236">
    <property type="entry name" value="PDXT_SNO_1"/>
    <property type="match status" value="1"/>
</dbReference>
<dbReference type="PROSITE" id="PS51130">
    <property type="entry name" value="PDXT_SNO_2"/>
    <property type="match status" value="1"/>
</dbReference>
<accession>P0C036</accession>
<evidence type="ECO:0000255" key="1">
    <source>
        <dbReference type="HAMAP-Rule" id="MF_01615"/>
    </source>
</evidence>
<gene>
    <name evidence="1" type="primary">pdxT</name>
    <name type="ordered locus">MMP1656</name>
</gene>
<proteinExistence type="inferred from homology"/>
<keyword id="KW-0315">Glutamine amidotransferase</keyword>
<keyword id="KW-0378">Hydrolase</keyword>
<keyword id="KW-0456">Lyase</keyword>
<keyword id="KW-0663">Pyridoxal phosphate</keyword>
<keyword id="KW-1185">Reference proteome</keyword>
<comment type="function">
    <text evidence="1">Catalyzes the hydrolysis of glutamine to glutamate and ammonia as part of the biosynthesis of pyridoxal 5'-phosphate. The resulting ammonia molecule is channeled to the active site of PdxS.</text>
</comment>
<comment type="catalytic activity">
    <reaction evidence="1">
        <text>aldehydo-D-ribose 5-phosphate + D-glyceraldehyde 3-phosphate + L-glutamine = pyridoxal 5'-phosphate + L-glutamate + phosphate + 3 H2O + H(+)</text>
        <dbReference type="Rhea" id="RHEA:31507"/>
        <dbReference type="ChEBI" id="CHEBI:15377"/>
        <dbReference type="ChEBI" id="CHEBI:15378"/>
        <dbReference type="ChEBI" id="CHEBI:29985"/>
        <dbReference type="ChEBI" id="CHEBI:43474"/>
        <dbReference type="ChEBI" id="CHEBI:58273"/>
        <dbReference type="ChEBI" id="CHEBI:58359"/>
        <dbReference type="ChEBI" id="CHEBI:59776"/>
        <dbReference type="ChEBI" id="CHEBI:597326"/>
        <dbReference type="EC" id="4.3.3.6"/>
    </reaction>
</comment>
<comment type="catalytic activity">
    <reaction evidence="1">
        <text>L-glutamine + H2O = L-glutamate + NH4(+)</text>
        <dbReference type="Rhea" id="RHEA:15889"/>
        <dbReference type="ChEBI" id="CHEBI:15377"/>
        <dbReference type="ChEBI" id="CHEBI:28938"/>
        <dbReference type="ChEBI" id="CHEBI:29985"/>
        <dbReference type="ChEBI" id="CHEBI:58359"/>
        <dbReference type="EC" id="3.5.1.2"/>
    </reaction>
</comment>
<comment type="pathway">
    <text evidence="1">Cofactor biosynthesis; pyridoxal 5'-phosphate biosynthesis.</text>
</comment>
<comment type="subunit">
    <text evidence="1">In the presence of PdxS, forms a dodecamer of heterodimers. Only shows activity in the heterodimer.</text>
</comment>
<comment type="similarity">
    <text evidence="1">Belongs to the glutaminase PdxT/SNO family.</text>
</comment>
<organism>
    <name type="scientific">Methanococcus maripaludis (strain DSM 14266 / JCM 13030 / NBRC 101832 / S2 / LL)</name>
    <dbReference type="NCBI Taxonomy" id="267377"/>
    <lineage>
        <taxon>Archaea</taxon>
        <taxon>Methanobacteriati</taxon>
        <taxon>Methanobacteriota</taxon>
        <taxon>Methanomada group</taxon>
        <taxon>Methanococci</taxon>
        <taxon>Methanococcales</taxon>
        <taxon>Methanococcaceae</taxon>
        <taxon>Methanococcus</taxon>
    </lineage>
</organism>
<protein>
    <recommendedName>
        <fullName evidence="1">Pyridoxal 5'-phosphate synthase subunit PdxT</fullName>
        <ecNumber evidence="1">4.3.3.6</ecNumber>
    </recommendedName>
    <alternativeName>
        <fullName evidence="1">Pdx2</fullName>
    </alternativeName>
    <alternativeName>
        <fullName evidence="1">Pyridoxal 5'-phosphate synthase glutaminase subunit</fullName>
        <ecNumber evidence="1">3.5.1.2</ecNumber>
    </alternativeName>
</protein>
<feature type="chain" id="PRO_0000135683" description="Pyridoxal 5'-phosphate synthase subunit PdxT">
    <location>
        <begin position="1"/>
        <end position="187"/>
    </location>
</feature>
<feature type="active site" description="Nucleophile" evidence="1">
    <location>
        <position position="76"/>
    </location>
</feature>
<feature type="active site" description="Charge relay system" evidence="1">
    <location>
        <position position="165"/>
    </location>
</feature>
<feature type="active site" description="Charge relay system" evidence="1">
    <location>
        <position position="167"/>
    </location>
</feature>
<feature type="binding site" evidence="1">
    <location>
        <begin position="47"/>
        <end position="49"/>
    </location>
    <ligand>
        <name>L-glutamine</name>
        <dbReference type="ChEBI" id="CHEBI:58359"/>
    </ligand>
</feature>
<feature type="binding site" evidence="1">
    <location>
        <position position="102"/>
    </location>
    <ligand>
        <name>L-glutamine</name>
        <dbReference type="ChEBI" id="CHEBI:58359"/>
    </ligand>
</feature>
<feature type="binding site" evidence="1">
    <location>
        <begin position="128"/>
        <end position="129"/>
    </location>
    <ligand>
        <name>L-glutamine</name>
        <dbReference type="ChEBI" id="CHEBI:58359"/>
    </ligand>
</feature>
<reference key="1">
    <citation type="journal article" date="2004" name="J. Bacteriol.">
        <title>Complete genome sequence of the genetically tractable hydrogenotrophic methanogen Methanococcus maripaludis.</title>
        <authorList>
            <person name="Hendrickson E.L."/>
            <person name="Kaul R."/>
            <person name="Zhou Y."/>
            <person name="Bovee D."/>
            <person name="Chapman P."/>
            <person name="Chung J."/>
            <person name="Conway de Macario E."/>
            <person name="Dodsworth J.A."/>
            <person name="Gillett W."/>
            <person name="Graham D.E."/>
            <person name="Hackett M."/>
            <person name="Haydock A.K."/>
            <person name="Kang A."/>
            <person name="Land M.L."/>
            <person name="Levy R."/>
            <person name="Lie T.J."/>
            <person name="Major T.A."/>
            <person name="Moore B.C."/>
            <person name="Porat I."/>
            <person name="Palmeiri A."/>
            <person name="Rouse G."/>
            <person name="Saenphimmachak C."/>
            <person name="Soell D."/>
            <person name="Van Dien S."/>
            <person name="Wang T."/>
            <person name="Whitman W.B."/>
            <person name="Xia Q."/>
            <person name="Zhang Y."/>
            <person name="Larimer F.W."/>
            <person name="Olson M.V."/>
            <person name="Leigh J.A."/>
        </authorList>
    </citation>
    <scope>NUCLEOTIDE SEQUENCE [LARGE SCALE GENOMIC DNA]</scope>
    <source>
        <strain>DSM 14266 / JCM 13030 / NBRC 101832 / S2 / LL</strain>
    </source>
</reference>